<feature type="chain" id="PRO_0000114918" description="Splicing factor 3A subunit 1">
    <location>
        <begin position="1"/>
        <end position="791"/>
    </location>
</feature>
<feature type="repeat" description="SURP motif 1">
    <location>
        <begin position="52"/>
        <end position="94"/>
    </location>
</feature>
<feature type="repeat" description="SURP motif 2">
    <location>
        <begin position="166"/>
        <end position="208"/>
    </location>
</feature>
<feature type="domain" description="Ubiquitin-like" evidence="3">
    <location>
        <begin position="705"/>
        <end position="788"/>
    </location>
</feature>
<feature type="region of interest" description="Disordered" evidence="4">
    <location>
        <begin position="1"/>
        <end position="41"/>
    </location>
</feature>
<feature type="region of interest" description="Disordered" evidence="4">
    <location>
        <begin position="318"/>
        <end position="411"/>
    </location>
</feature>
<feature type="region of interest" description="Disordered" evidence="4">
    <location>
        <begin position="486"/>
        <end position="516"/>
    </location>
</feature>
<feature type="region of interest" description="Disordered" evidence="4">
    <location>
        <begin position="528"/>
        <end position="582"/>
    </location>
</feature>
<feature type="region of interest" description="Disordered" evidence="4">
    <location>
        <begin position="664"/>
        <end position="684"/>
    </location>
</feature>
<feature type="region of interest" description="Required and sufficient for nuclear import" evidence="2">
    <location>
        <begin position="678"/>
        <end position="700"/>
    </location>
</feature>
<feature type="compositionally biased region" description="Basic and acidic residues" evidence="4">
    <location>
        <begin position="21"/>
        <end position="34"/>
    </location>
</feature>
<feature type="compositionally biased region" description="Acidic residues" evidence="4">
    <location>
        <begin position="320"/>
        <end position="336"/>
    </location>
</feature>
<feature type="compositionally biased region" description="Polar residues" evidence="4">
    <location>
        <begin position="340"/>
        <end position="351"/>
    </location>
</feature>
<feature type="compositionally biased region" description="Acidic residues" evidence="4">
    <location>
        <begin position="352"/>
        <end position="362"/>
    </location>
</feature>
<feature type="compositionally biased region" description="Pro residues" evidence="4">
    <location>
        <begin position="366"/>
        <end position="382"/>
    </location>
</feature>
<feature type="compositionally biased region" description="Basic and acidic residues" evidence="4">
    <location>
        <begin position="386"/>
        <end position="395"/>
    </location>
</feature>
<feature type="compositionally biased region" description="Basic and acidic residues" evidence="4">
    <location>
        <begin position="486"/>
        <end position="500"/>
    </location>
</feature>
<feature type="compositionally biased region" description="Polar residues" evidence="4">
    <location>
        <begin position="507"/>
        <end position="516"/>
    </location>
</feature>
<feature type="compositionally biased region" description="Polar residues" evidence="4">
    <location>
        <begin position="561"/>
        <end position="570"/>
    </location>
</feature>
<feature type="compositionally biased region" description="Pro residues" evidence="4">
    <location>
        <begin position="664"/>
        <end position="673"/>
    </location>
</feature>
<feature type="site" description="Critical for binding to SF3A3" evidence="1">
    <location>
        <position position="169"/>
    </location>
</feature>
<feature type="modified residue" description="N6-acetyllysine" evidence="7">
    <location>
        <position position="55"/>
    </location>
</feature>
<feature type="modified residue" description="Phosphoserine" evidence="2">
    <location>
        <position position="320"/>
    </location>
</feature>
<feature type="modified residue" description="Phosphoserine" evidence="2">
    <location>
        <position position="329"/>
    </location>
</feature>
<feature type="modified residue" description="Phosphoserine" evidence="2">
    <location>
        <position position="357"/>
    </location>
</feature>
<feature type="modified residue" description="Phosphoserine" evidence="2">
    <location>
        <position position="411"/>
    </location>
</feature>
<feature type="modified residue" description="Phosphoserine" evidence="2">
    <location>
        <position position="449"/>
    </location>
</feature>
<feature type="modified residue" description="Phosphotyrosine" evidence="2">
    <location>
        <position position="454"/>
    </location>
</feature>
<feature type="modified residue" description="Phosphoserine" evidence="2">
    <location>
        <position position="506"/>
    </location>
</feature>
<feature type="modified residue" description="Phosphotyrosine" evidence="2">
    <location>
        <position position="757"/>
    </location>
</feature>
<feature type="cross-link" description="Glycyl lysine isopeptide (Lys-Gly) (interchain with G-Cter in SUMO2)" evidence="2">
    <location>
        <position position="20"/>
    </location>
</feature>
<feature type="cross-link" description="Glycyl lysine isopeptide (Lys-Gly) (interchain with G-Cter in SUMO2)" evidence="2">
    <location>
        <position position="131"/>
    </location>
</feature>
<feature type="cross-link" description="Glycyl lysine isopeptide (Lys-Gly) (interchain with G-Cter in SUMO2)" evidence="2">
    <location>
        <position position="422"/>
    </location>
</feature>
<feature type="cross-link" description="Glycyl lysine isopeptide (Lys-Gly) (interchain with G-Cter in SUMO2)" evidence="2">
    <location>
        <position position="497"/>
    </location>
</feature>
<feature type="cross-link" description="Glycyl lysine isopeptide (Lys-Gly) (interchain with G-Cter in SUMO2)" evidence="2">
    <location>
        <position position="540"/>
    </location>
</feature>
<feature type="cross-link" description="Glycyl lysine isopeptide (Lys-Gly) (interchain with G-Cter in SUMO2)" evidence="2">
    <location>
        <position position="684"/>
    </location>
</feature>
<feature type="sequence conflict" description="In Ref. 1; BAC26142." evidence="6" ref="1">
    <original>R</original>
    <variation>G</variation>
    <location>
        <position position="257"/>
    </location>
</feature>
<feature type="sequence conflict" description="In Ref. 1; BAC26294." evidence="6" ref="1">
    <original>P</original>
    <variation>L</variation>
    <location>
        <position position="368"/>
    </location>
</feature>
<feature type="sequence conflict" description="In Ref. 1; BAC26853." evidence="6" ref="1">
    <original>Q</original>
    <variation>L</variation>
    <location>
        <position position="708"/>
    </location>
</feature>
<feature type="helix" evidence="8">
    <location>
        <begin position="685"/>
        <end position="687"/>
    </location>
</feature>
<feature type="helix" evidence="8">
    <location>
        <begin position="692"/>
        <end position="698"/>
    </location>
</feature>
<feature type="strand" evidence="8">
    <location>
        <begin position="703"/>
        <end position="709"/>
    </location>
</feature>
<feature type="strand" evidence="8">
    <location>
        <begin position="713"/>
        <end position="715"/>
    </location>
</feature>
<feature type="strand" evidence="8">
    <location>
        <begin position="721"/>
        <end position="729"/>
    </location>
</feature>
<feature type="helix" evidence="8">
    <location>
        <begin position="736"/>
        <end position="745"/>
    </location>
</feature>
<feature type="turn" evidence="8">
    <location>
        <begin position="750"/>
        <end position="752"/>
    </location>
</feature>
<feature type="strand" evidence="8">
    <location>
        <begin position="753"/>
        <end position="757"/>
    </location>
</feature>
<feature type="strand" evidence="8">
    <location>
        <begin position="760"/>
        <end position="762"/>
    </location>
</feature>
<feature type="helix" evidence="8">
    <location>
        <begin position="768"/>
        <end position="771"/>
    </location>
</feature>
<feature type="strand" evidence="8">
    <location>
        <begin position="778"/>
        <end position="783"/>
    </location>
</feature>
<proteinExistence type="evidence at protein level"/>
<sequence length="791" mass="88545">MQAGPVQAVPPPPPVATESKQPIEEEASSKEDPTPSKPVVGIIYPPPEVRNIVDKTASFVARNGPEFEARIRQNEINNPKFNFLNPNDPYHAYYRHKVSEFKEGKAQEPSAAIPKVMQQQQQATQQQLPQKVQAQVIQETIVPKEPPPEFEFIADPPSISAFDLDVVKLTAQFVARNGRQFLTQLMQKEQRNYQFDFLRPQHSLFNYFTKLVEQYTKILIPPKGLFSKLKKEAENPREVLDQVCYRVEWAKFQERERKKEEEEKEKERVAYAQIDWHDFVVVETVDFQPNEQGNFPPPTTPEELGARILIQERYEKFGESEEVEMEVESDEEDQEKAEETPSQLDQDTQVQDMDEGSDDEEEGQKVPPPPETPMPPPLPPTPDQVIVRKDYDPKASKPLPPAPAPDEYLVSPITGEKIPASKMQEHMRIGLLDPRWLEQRDRSIREKQSDDEVYAPGLDIESSLKQLAERRTDIFGVEETAIGKKIGEEEIQKPEEKVTWDGHSGSMARTQQAAQANITLQEQIEAIHKAKGLVPEDDTKEKIGPSKPNEIPQQPPPPSSATNIPSSAPPITSVPRPPAMPPPVRTTVVSAVPVMPRPPMASVVRLPPGSVIAPMPPIIHAPRINVVPMPPAAPPIMAPRPPPMIVPTAFVPAPPVAPVPAPAPMPPVHPPPPMEDEPPSKKLKTEDSLMPEEEFLRRNKGPVSIKVQVPNMQDKTEWKLNGQGLVFTLPLTDQVSVIKVKIHEATGMPAGKQKLQYEGIFIKDSNSLAYYNMASGAVIHLALKERGGRKK</sequence>
<dbReference type="EMBL" id="AK028829">
    <property type="protein sequence ID" value="BAC26142.1"/>
    <property type="molecule type" value="mRNA"/>
</dbReference>
<dbReference type="EMBL" id="AK029095">
    <property type="protein sequence ID" value="BAC26294.1"/>
    <property type="molecule type" value="mRNA"/>
</dbReference>
<dbReference type="EMBL" id="AK030223">
    <property type="protein sequence ID" value="BAC26853.1"/>
    <property type="molecule type" value="mRNA"/>
</dbReference>
<dbReference type="EMBL" id="AL807825">
    <property type="status" value="NOT_ANNOTATED_CDS"/>
    <property type="molecule type" value="Genomic_DNA"/>
</dbReference>
<dbReference type="EMBL" id="BC010727">
    <property type="protein sequence ID" value="AAH10727.1"/>
    <property type="molecule type" value="mRNA"/>
</dbReference>
<dbReference type="EMBL" id="BC029753">
    <property type="protein sequence ID" value="AAH29753.1"/>
    <property type="molecule type" value="mRNA"/>
</dbReference>
<dbReference type="CCDS" id="CCDS24380.1"/>
<dbReference type="RefSeq" id="NP_080451.4">
    <property type="nucleotide sequence ID" value="NM_026175.5"/>
</dbReference>
<dbReference type="PDB" id="1WE7">
    <property type="method" value="NMR"/>
    <property type="chains" value="A=685-786"/>
</dbReference>
<dbReference type="PDBsum" id="1WE7"/>
<dbReference type="BMRB" id="Q8K4Z5"/>
<dbReference type="SMR" id="Q8K4Z5"/>
<dbReference type="BioGRID" id="212207">
    <property type="interactions" value="67"/>
</dbReference>
<dbReference type="FunCoup" id="Q8K4Z5">
    <property type="interactions" value="4888"/>
</dbReference>
<dbReference type="IntAct" id="Q8K4Z5">
    <property type="interactions" value="38"/>
</dbReference>
<dbReference type="MINT" id="Q8K4Z5"/>
<dbReference type="STRING" id="10090.ENSMUSP00000002198"/>
<dbReference type="GlyGen" id="Q8K4Z5">
    <property type="glycosylation" value="3 sites, 1 O-linked glycan (1 site)"/>
</dbReference>
<dbReference type="iPTMnet" id="Q8K4Z5"/>
<dbReference type="PhosphoSitePlus" id="Q8K4Z5"/>
<dbReference type="SwissPalm" id="Q8K4Z5"/>
<dbReference type="jPOST" id="Q8K4Z5"/>
<dbReference type="PaxDb" id="10090-ENSMUSP00000002198"/>
<dbReference type="PeptideAtlas" id="Q8K4Z5"/>
<dbReference type="ProteomicsDB" id="261504"/>
<dbReference type="Pumba" id="Q8K4Z5"/>
<dbReference type="Antibodypedia" id="254">
    <property type="antibodies" value="302 antibodies from 28 providers"/>
</dbReference>
<dbReference type="DNASU" id="67465"/>
<dbReference type="Ensembl" id="ENSMUST00000002198.4">
    <property type="protein sequence ID" value="ENSMUSP00000002198.4"/>
    <property type="gene ID" value="ENSMUSG00000002129.12"/>
</dbReference>
<dbReference type="GeneID" id="67465"/>
<dbReference type="KEGG" id="mmu:67465"/>
<dbReference type="UCSC" id="uc007hup.2">
    <property type="organism name" value="mouse"/>
</dbReference>
<dbReference type="AGR" id="MGI:1914715"/>
<dbReference type="CTD" id="10291"/>
<dbReference type="MGI" id="MGI:1914715">
    <property type="gene designation" value="Sf3a1"/>
</dbReference>
<dbReference type="VEuPathDB" id="HostDB:ENSMUSG00000002129"/>
<dbReference type="eggNOG" id="KOG0007">
    <property type="taxonomic scope" value="Eukaryota"/>
</dbReference>
<dbReference type="GeneTree" id="ENSGT00730000111077"/>
<dbReference type="HOGENOM" id="CLU_013259_1_0_1"/>
<dbReference type="InParanoid" id="Q8K4Z5"/>
<dbReference type="OMA" id="HAYYRHR"/>
<dbReference type="OrthoDB" id="81066at9989"/>
<dbReference type="PhylomeDB" id="Q8K4Z5"/>
<dbReference type="TreeFam" id="TF105705"/>
<dbReference type="Reactome" id="R-MMU-72163">
    <property type="pathway name" value="mRNA Splicing - Major Pathway"/>
</dbReference>
<dbReference type="BioGRID-ORCS" id="67465">
    <property type="hits" value="28 hits in 80 CRISPR screens"/>
</dbReference>
<dbReference type="ChiTaRS" id="Sf3a1">
    <property type="organism name" value="mouse"/>
</dbReference>
<dbReference type="EvolutionaryTrace" id="Q8K4Z5"/>
<dbReference type="PRO" id="PR:Q8K4Z5"/>
<dbReference type="Proteomes" id="UP000000589">
    <property type="component" value="Chromosome 11"/>
</dbReference>
<dbReference type="RNAct" id="Q8K4Z5">
    <property type="molecule type" value="protein"/>
</dbReference>
<dbReference type="Bgee" id="ENSMUSG00000002129">
    <property type="expression patterns" value="Expressed in epiblast (generic) and 272 other cell types or tissues"/>
</dbReference>
<dbReference type="GO" id="GO:0071013">
    <property type="term" value="C:catalytic step 2 spliceosome"/>
    <property type="evidence" value="ECO:0007669"/>
    <property type="project" value="Ensembl"/>
</dbReference>
<dbReference type="GO" id="GO:0016607">
    <property type="term" value="C:nuclear speck"/>
    <property type="evidence" value="ECO:0000250"/>
    <property type="project" value="UniProtKB"/>
</dbReference>
<dbReference type="GO" id="GO:0005634">
    <property type="term" value="C:nucleus"/>
    <property type="evidence" value="ECO:0000250"/>
    <property type="project" value="UniProtKB"/>
</dbReference>
<dbReference type="GO" id="GO:0005686">
    <property type="term" value="C:U2 snRNP"/>
    <property type="evidence" value="ECO:0000250"/>
    <property type="project" value="UniProtKB"/>
</dbReference>
<dbReference type="GO" id="GO:0071005">
    <property type="term" value="C:U2-type precatalytic spliceosome"/>
    <property type="evidence" value="ECO:0000250"/>
    <property type="project" value="UniProtKB"/>
</dbReference>
<dbReference type="GO" id="GO:0071004">
    <property type="term" value="C:U2-type prespliceosome"/>
    <property type="evidence" value="ECO:0000250"/>
    <property type="project" value="UniProtKB"/>
</dbReference>
<dbReference type="GO" id="GO:0005684">
    <property type="term" value="C:U2-type spliceosomal complex"/>
    <property type="evidence" value="ECO:0000250"/>
    <property type="project" value="UniProtKB"/>
</dbReference>
<dbReference type="GO" id="GO:0003723">
    <property type="term" value="F:RNA binding"/>
    <property type="evidence" value="ECO:0000250"/>
    <property type="project" value="UniProtKB"/>
</dbReference>
<dbReference type="GO" id="GO:0045292">
    <property type="term" value="P:mRNA cis splicing, via spliceosome"/>
    <property type="evidence" value="ECO:0007669"/>
    <property type="project" value="InterPro"/>
</dbReference>
<dbReference type="GO" id="GO:0000398">
    <property type="term" value="P:mRNA splicing, via spliceosome"/>
    <property type="evidence" value="ECO:0000250"/>
    <property type="project" value="UniProtKB"/>
</dbReference>
<dbReference type="GO" id="GO:1903241">
    <property type="term" value="P:U2-type prespliceosome assembly"/>
    <property type="evidence" value="ECO:0000250"/>
    <property type="project" value="UniProtKB"/>
</dbReference>
<dbReference type="CDD" id="cd01800">
    <property type="entry name" value="Ubl_SF3a120"/>
    <property type="match status" value="1"/>
</dbReference>
<dbReference type="FunFam" id="1.10.10.790:FF:000002">
    <property type="entry name" value="Splicing factor 3A subunit 1"/>
    <property type="match status" value="1"/>
</dbReference>
<dbReference type="FunFam" id="3.10.20.90:FF:000091">
    <property type="entry name" value="Splicing factor 3A subunit 1"/>
    <property type="match status" value="1"/>
</dbReference>
<dbReference type="FunFam" id="1.10.10.790:FF:000001">
    <property type="entry name" value="Splicing factor 3a, subunit 1"/>
    <property type="match status" value="1"/>
</dbReference>
<dbReference type="Gene3D" id="3.10.20.90">
    <property type="entry name" value="Phosphatidylinositol 3-kinase Catalytic Subunit, Chain A, domain 1"/>
    <property type="match status" value="1"/>
</dbReference>
<dbReference type="Gene3D" id="1.10.10.790">
    <property type="entry name" value="Surp module"/>
    <property type="match status" value="2"/>
</dbReference>
<dbReference type="InterPro" id="IPR045146">
    <property type="entry name" value="SF3A1"/>
</dbReference>
<dbReference type="InterPro" id="IPR022030">
    <property type="entry name" value="SF3A1_dom"/>
</dbReference>
<dbReference type="InterPro" id="IPR035563">
    <property type="entry name" value="SF3As1_ubi"/>
</dbReference>
<dbReference type="InterPro" id="IPR000061">
    <property type="entry name" value="Surp"/>
</dbReference>
<dbReference type="InterPro" id="IPR035967">
    <property type="entry name" value="SWAP/Surp_sf"/>
</dbReference>
<dbReference type="InterPro" id="IPR000626">
    <property type="entry name" value="Ubiquitin-like_dom"/>
</dbReference>
<dbReference type="InterPro" id="IPR029071">
    <property type="entry name" value="Ubiquitin-like_domsf"/>
</dbReference>
<dbReference type="PANTHER" id="PTHR15316">
    <property type="entry name" value="SPLICEOSOME ASSOCIATED PROTEIN 114/SWAP SPLICING FACTOR-RELATED"/>
    <property type="match status" value="1"/>
</dbReference>
<dbReference type="PANTHER" id="PTHR15316:SF1">
    <property type="entry name" value="SPLICING FACTOR 3A SUBUNIT 1"/>
    <property type="match status" value="1"/>
</dbReference>
<dbReference type="Pfam" id="PF12230">
    <property type="entry name" value="PRP21_like_P"/>
    <property type="match status" value="1"/>
</dbReference>
<dbReference type="Pfam" id="PF01805">
    <property type="entry name" value="Surp"/>
    <property type="match status" value="2"/>
</dbReference>
<dbReference type="Pfam" id="PF00240">
    <property type="entry name" value="ubiquitin"/>
    <property type="match status" value="1"/>
</dbReference>
<dbReference type="SMART" id="SM00648">
    <property type="entry name" value="SWAP"/>
    <property type="match status" value="2"/>
</dbReference>
<dbReference type="SMART" id="SM00213">
    <property type="entry name" value="UBQ"/>
    <property type="match status" value="1"/>
</dbReference>
<dbReference type="SUPFAM" id="SSF109905">
    <property type="entry name" value="Surp module (SWAP domain)"/>
    <property type="match status" value="2"/>
</dbReference>
<dbReference type="SUPFAM" id="SSF54236">
    <property type="entry name" value="Ubiquitin-like"/>
    <property type="match status" value="1"/>
</dbReference>
<dbReference type="PROSITE" id="PS50128">
    <property type="entry name" value="SURP"/>
    <property type="match status" value="2"/>
</dbReference>
<dbReference type="PROSITE" id="PS50053">
    <property type="entry name" value="UBIQUITIN_2"/>
    <property type="match status" value="1"/>
</dbReference>
<reference key="1">
    <citation type="journal article" date="2005" name="Science">
        <title>The transcriptional landscape of the mammalian genome.</title>
        <authorList>
            <person name="Carninci P."/>
            <person name="Kasukawa T."/>
            <person name="Katayama S."/>
            <person name="Gough J."/>
            <person name="Frith M.C."/>
            <person name="Maeda N."/>
            <person name="Oyama R."/>
            <person name="Ravasi T."/>
            <person name="Lenhard B."/>
            <person name="Wells C."/>
            <person name="Kodzius R."/>
            <person name="Shimokawa K."/>
            <person name="Bajic V.B."/>
            <person name="Brenner S.E."/>
            <person name="Batalov S."/>
            <person name="Forrest A.R."/>
            <person name="Zavolan M."/>
            <person name="Davis M.J."/>
            <person name="Wilming L.G."/>
            <person name="Aidinis V."/>
            <person name="Allen J.E."/>
            <person name="Ambesi-Impiombato A."/>
            <person name="Apweiler R."/>
            <person name="Aturaliya R.N."/>
            <person name="Bailey T.L."/>
            <person name="Bansal M."/>
            <person name="Baxter L."/>
            <person name="Beisel K.W."/>
            <person name="Bersano T."/>
            <person name="Bono H."/>
            <person name="Chalk A.M."/>
            <person name="Chiu K.P."/>
            <person name="Choudhary V."/>
            <person name="Christoffels A."/>
            <person name="Clutterbuck D.R."/>
            <person name="Crowe M.L."/>
            <person name="Dalla E."/>
            <person name="Dalrymple B.P."/>
            <person name="de Bono B."/>
            <person name="Della Gatta G."/>
            <person name="di Bernardo D."/>
            <person name="Down T."/>
            <person name="Engstrom P."/>
            <person name="Fagiolini M."/>
            <person name="Faulkner G."/>
            <person name="Fletcher C.F."/>
            <person name="Fukushima T."/>
            <person name="Furuno M."/>
            <person name="Futaki S."/>
            <person name="Gariboldi M."/>
            <person name="Georgii-Hemming P."/>
            <person name="Gingeras T.R."/>
            <person name="Gojobori T."/>
            <person name="Green R.E."/>
            <person name="Gustincich S."/>
            <person name="Harbers M."/>
            <person name="Hayashi Y."/>
            <person name="Hensch T.K."/>
            <person name="Hirokawa N."/>
            <person name="Hill D."/>
            <person name="Huminiecki L."/>
            <person name="Iacono M."/>
            <person name="Ikeo K."/>
            <person name="Iwama A."/>
            <person name="Ishikawa T."/>
            <person name="Jakt M."/>
            <person name="Kanapin A."/>
            <person name="Katoh M."/>
            <person name="Kawasawa Y."/>
            <person name="Kelso J."/>
            <person name="Kitamura H."/>
            <person name="Kitano H."/>
            <person name="Kollias G."/>
            <person name="Krishnan S.P."/>
            <person name="Kruger A."/>
            <person name="Kummerfeld S.K."/>
            <person name="Kurochkin I.V."/>
            <person name="Lareau L.F."/>
            <person name="Lazarevic D."/>
            <person name="Lipovich L."/>
            <person name="Liu J."/>
            <person name="Liuni S."/>
            <person name="McWilliam S."/>
            <person name="Madan Babu M."/>
            <person name="Madera M."/>
            <person name="Marchionni L."/>
            <person name="Matsuda H."/>
            <person name="Matsuzawa S."/>
            <person name="Miki H."/>
            <person name="Mignone F."/>
            <person name="Miyake S."/>
            <person name="Morris K."/>
            <person name="Mottagui-Tabar S."/>
            <person name="Mulder N."/>
            <person name="Nakano N."/>
            <person name="Nakauchi H."/>
            <person name="Ng P."/>
            <person name="Nilsson R."/>
            <person name="Nishiguchi S."/>
            <person name="Nishikawa S."/>
            <person name="Nori F."/>
            <person name="Ohara O."/>
            <person name="Okazaki Y."/>
            <person name="Orlando V."/>
            <person name="Pang K.C."/>
            <person name="Pavan W.J."/>
            <person name="Pavesi G."/>
            <person name="Pesole G."/>
            <person name="Petrovsky N."/>
            <person name="Piazza S."/>
            <person name="Reed J."/>
            <person name="Reid J.F."/>
            <person name="Ring B.Z."/>
            <person name="Ringwald M."/>
            <person name="Rost B."/>
            <person name="Ruan Y."/>
            <person name="Salzberg S.L."/>
            <person name="Sandelin A."/>
            <person name="Schneider C."/>
            <person name="Schoenbach C."/>
            <person name="Sekiguchi K."/>
            <person name="Semple C.A."/>
            <person name="Seno S."/>
            <person name="Sessa L."/>
            <person name="Sheng Y."/>
            <person name="Shibata Y."/>
            <person name="Shimada H."/>
            <person name="Shimada K."/>
            <person name="Silva D."/>
            <person name="Sinclair B."/>
            <person name="Sperling S."/>
            <person name="Stupka E."/>
            <person name="Sugiura K."/>
            <person name="Sultana R."/>
            <person name="Takenaka Y."/>
            <person name="Taki K."/>
            <person name="Tammoja K."/>
            <person name="Tan S.L."/>
            <person name="Tang S."/>
            <person name="Taylor M.S."/>
            <person name="Tegner J."/>
            <person name="Teichmann S.A."/>
            <person name="Ueda H.R."/>
            <person name="van Nimwegen E."/>
            <person name="Verardo R."/>
            <person name="Wei C.L."/>
            <person name="Yagi K."/>
            <person name="Yamanishi H."/>
            <person name="Zabarovsky E."/>
            <person name="Zhu S."/>
            <person name="Zimmer A."/>
            <person name="Hide W."/>
            <person name="Bult C."/>
            <person name="Grimmond S.M."/>
            <person name="Teasdale R.D."/>
            <person name="Liu E.T."/>
            <person name="Brusic V."/>
            <person name="Quackenbush J."/>
            <person name="Wahlestedt C."/>
            <person name="Mattick J.S."/>
            <person name="Hume D.A."/>
            <person name="Kai C."/>
            <person name="Sasaki D."/>
            <person name="Tomaru Y."/>
            <person name="Fukuda S."/>
            <person name="Kanamori-Katayama M."/>
            <person name="Suzuki M."/>
            <person name="Aoki J."/>
            <person name="Arakawa T."/>
            <person name="Iida J."/>
            <person name="Imamura K."/>
            <person name="Itoh M."/>
            <person name="Kato T."/>
            <person name="Kawaji H."/>
            <person name="Kawagashira N."/>
            <person name="Kawashima T."/>
            <person name="Kojima M."/>
            <person name="Kondo S."/>
            <person name="Konno H."/>
            <person name="Nakano K."/>
            <person name="Ninomiya N."/>
            <person name="Nishio T."/>
            <person name="Okada M."/>
            <person name="Plessy C."/>
            <person name="Shibata K."/>
            <person name="Shiraki T."/>
            <person name="Suzuki S."/>
            <person name="Tagami M."/>
            <person name="Waki K."/>
            <person name="Watahiki A."/>
            <person name="Okamura-Oho Y."/>
            <person name="Suzuki H."/>
            <person name="Kawai J."/>
            <person name="Hayashizaki Y."/>
        </authorList>
    </citation>
    <scope>NUCLEOTIDE SEQUENCE [LARGE SCALE MRNA]</scope>
    <source>
        <strain>C57BL/6J</strain>
        <tissue>Skin</tissue>
        <tissue>Testis</tissue>
    </source>
</reference>
<reference key="2">
    <citation type="journal article" date="2009" name="PLoS Biol.">
        <title>Lineage-specific biology revealed by a finished genome assembly of the mouse.</title>
        <authorList>
            <person name="Church D.M."/>
            <person name="Goodstadt L."/>
            <person name="Hillier L.W."/>
            <person name="Zody M.C."/>
            <person name="Goldstein S."/>
            <person name="She X."/>
            <person name="Bult C.J."/>
            <person name="Agarwala R."/>
            <person name="Cherry J.L."/>
            <person name="DiCuccio M."/>
            <person name="Hlavina W."/>
            <person name="Kapustin Y."/>
            <person name="Meric P."/>
            <person name="Maglott D."/>
            <person name="Birtle Z."/>
            <person name="Marques A.C."/>
            <person name="Graves T."/>
            <person name="Zhou S."/>
            <person name="Teague B."/>
            <person name="Potamousis K."/>
            <person name="Churas C."/>
            <person name="Place M."/>
            <person name="Herschleb J."/>
            <person name="Runnheim R."/>
            <person name="Forrest D."/>
            <person name="Amos-Landgraf J."/>
            <person name="Schwartz D.C."/>
            <person name="Cheng Z."/>
            <person name="Lindblad-Toh K."/>
            <person name="Eichler E.E."/>
            <person name="Ponting C.P."/>
        </authorList>
    </citation>
    <scope>NUCLEOTIDE SEQUENCE [LARGE SCALE GENOMIC DNA]</scope>
    <source>
        <strain>C57BL/6J</strain>
    </source>
</reference>
<reference key="3">
    <citation type="journal article" date="2004" name="Genome Res.">
        <title>The status, quality, and expansion of the NIH full-length cDNA project: the Mammalian Gene Collection (MGC).</title>
        <authorList>
            <consortium name="The MGC Project Team"/>
        </authorList>
    </citation>
    <scope>NUCLEOTIDE SEQUENCE [LARGE SCALE MRNA]</scope>
    <source>
        <strain>Czech II</strain>
        <tissue>Mammary gland</tissue>
        <tissue>Mammary tumor</tissue>
    </source>
</reference>
<reference key="4">
    <citation type="submission" date="2009-01" db="UniProtKB">
        <authorList>
            <person name="Lubec G."/>
            <person name="Sunyer B."/>
            <person name="Chen W.-Q."/>
        </authorList>
    </citation>
    <scope>PROTEIN SEQUENCE OF 238-246; 471-484 AND 755-763</scope>
    <scope>IDENTIFICATION BY MASS SPECTROMETRY</scope>
    <source>
        <strain>OF1</strain>
        <tissue>Hippocampus</tissue>
    </source>
</reference>
<reference key="5">
    <citation type="journal article" date="2010" name="Cell">
        <title>A tissue-specific atlas of mouse protein phosphorylation and expression.</title>
        <authorList>
            <person name="Huttlin E.L."/>
            <person name="Jedrychowski M.P."/>
            <person name="Elias J.E."/>
            <person name="Goswami T."/>
            <person name="Rad R."/>
            <person name="Beausoleil S.A."/>
            <person name="Villen J."/>
            <person name="Haas W."/>
            <person name="Sowa M.E."/>
            <person name="Gygi S.P."/>
        </authorList>
    </citation>
    <scope>IDENTIFICATION BY MASS SPECTROMETRY [LARGE SCALE ANALYSIS]</scope>
    <source>
        <tissue>Brain</tissue>
        <tissue>Brown adipose tissue</tissue>
        <tissue>Heart</tissue>
        <tissue>Kidney</tissue>
        <tissue>Liver</tissue>
        <tissue>Lung</tissue>
        <tissue>Pancreas</tissue>
        <tissue>Spleen</tissue>
        <tissue>Testis</tissue>
    </source>
</reference>
<reference key="6">
    <citation type="journal article" date="2013" name="Mol. Cell">
        <title>SIRT5-mediated lysine desuccinylation impacts diverse metabolic pathways.</title>
        <authorList>
            <person name="Park J."/>
            <person name="Chen Y."/>
            <person name="Tishkoff D.X."/>
            <person name="Peng C."/>
            <person name="Tan M."/>
            <person name="Dai L."/>
            <person name="Xie Z."/>
            <person name="Zhang Y."/>
            <person name="Zwaans B.M."/>
            <person name="Skinner M.E."/>
            <person name="Lombard D.B."/>
            <person name="Zhao Y."/>
        </authorList>
    </citation>
    <scope>ACETYLATION [LARGE SCALE ANALYSIS] AT LYS-55</scope>
    <scope>IDENTIFICATION BY MASS SPECTROMETRY [LARGE SCALE ANALYSIS]</scope>
    <source>
        <tissue>Embryonic fibroblast</tissue>
    </source>
</reference>
<reference key="7">
    <citation type="submission" date="2004-11" db="PDB data bank">
        <title>Solution structure of ubiquitin-like domain in Sf3a120.</title>
        <authorList>
            <consortium name="RIKEN structural genomics initiative (RSGI)"/>
        </authorList>
    </citation>
    <scope>STRUCTURE BY NMR OF 685-786</scope>
</reference>
<reference key="8">
    <citation type="journal article" date="2015" name="PLoS ONE">
        <title>Age-related nuclear translocation of P2X6 subunit modifies splicing activity interacting with splicing factor 3A1.</title>
        <authorList>
            <person name="Diaz-Hernandez J.I."/>
            <person name="Sebastian-Serrano A."/>
            <person name="Gomez-Villafuertes R."/>
            <person name="Diaz-Hernandez M."/>
            <person name="Miras-Portugal M.T."/>
        </authorList>
    </citation>
    <scope>SUBCELLULAR LOCATION</scope>
    <scope>FUNCTION</scope>
    <scope>INTERACTION WITH P2RX6</scope>
</reference>
<organism>
    <name type="scientific">Mus musculus</name>
    <name type="common">Mouse</name>
    <dbReference type="NCBI Taxonomy" id="10090"/>
    <lineage>
        <taxon>Eukaryota</taxon>
        <taxon>Metazoa</taxon>
        <taxon>Chordata</taxon>
        <taxon>Craniata</taxon>
        <taxon>Vertebrata</taxon>
        <taxon>Euteleostomi</taxon>
        <taxon>Mammalia</taxon>
        <taxon>Eutheria</taxon>
        <taxon>Euarchontoglires</taxon>
        <taxon>Glires</taxon>
        <taxon>Rodentia</taxon>
        <taxon>Myomorpha</taxon>
        <taxon>Muroidea</taxon>
        <taxon>Muridae</taxon>
        <taxon>Murinae</taxon>
        <taxon>Mus</taxon>
        <taxon>Mus</taxon>
    </lineage>
</organism>
<protein>
    <recommendedName>
        <fullName>Splicing factor 3A subunit 1</fullName>
    </recommendedName>
    <alternativeName>
        <fullName>SF3a120</fullName>
    </alternativeName>
</protein>
<keyword id="KW-0002">3D-structure</keyword>
<keyword id="KW-0007">Acetylation</keyword>
<keyword id="KW-0903">Direct protein sequencing</keyword>
<keyword id="KW-1017">Isopeptide bond</keyword>
<keyword id="KW-0507">mRNA processing</keyword>
<keyword id="KW-0508">mRNA splicing</keyword>
<keyword id="KW-0539">Nucleus</keyword>
<keyword id="KW-0597">Phosphoprotein</keyword>
<keyword id="KW-1185">Reference proteome</keyword>
<keyword id="KW-0677">Repeat</keyword>
<keyword id="KW-0747">Spliceosome</keyword>
<keyword id="KW-0832">Ubl conjugation</keyword>
<gene>
    <name type="primary">Sf3a1</name>
</gene>
<comment type="function">
    <text evidence="2">Component of the 17S U2 SnRNP complex of the spliceosome, a large ribonucleoprotein complex that removes introns from transcribed pre-mRNAs. The 17S U2 SnRNP complex (1) directly participates in early spliceosome assembly and (2) mediates recognition of the intron branch site during pre-mRNA splicing by promoting the selection of the pre-mRNA branch-site adenosine, the nucleophile for the first step of splicing. Within the 17S U2 SnRNP complex, SF3A1 is part of the SF3A subcomplex that contributes to the assembly of the 17S U2 snRNP, and the subsequent assembly of the pre-spliceosome 'E' complex and the pre-catalytic spliceosome 'A' complex. Involved in pre-mRNA splicing as a component of pre-catalytic spliceosome 'B' complexes.</text>
</comment>
<comment type="subunit">
    <text evidence="2 5">Component of the 17S U2 SnRNP complex, a ribonucleoprotein complex that contains small nuclear RNA (snRNA) U2 and a number of specific proteins. Part of the SF3A subcomplex of the 17S U2 SnRNP complex which is composed of three subunits; SF3A3/SAP61, SF3A2/SAP62 and SF3A1/SAP114. SF3A associates with the splicing factor SF3B and a 12S RNA unit to form the mature 17S U2 small nuclear ribonucleoprotein complex (17S U2 snRNP). SF3A1 functions as a scaffold that interacts directly with both SF3A2 and SF3A3. Identified in the spliceosome 'E' complex, a precursor of the spliceosome 'A' complex. Identified in the spliceosome 'A' and 'B' complexes. Identified in the spliceosome 'C' complex. Interacts with P2RX6; resulting in a reduction of the splicing activity (PubMed:25874565).</text>
</comment>
<comment type="subcellular location">
    <subcellularLocation>
        <location evidence="2">Nucleus</location>
    </subcellularLocation>
    <subcellularLocation>
        <location evidence="2">Nucleus speckle</location>
    </subcellularLocation>
</comment>
<comment type="domain">
    <text evidence="1">SURP motif 2 mediates direct binding to SF3A3.</text>
</comment>
<name>SF3A1_MOUSE</name>
<evidence type="ECO:0000250" key="1"/>
<evidence type="ECO:0000250" key="2">
    <source>
        <dbReference type="UniProtKB" id="Q15459"/>
    </source>
</evidence>
<evidence type="ECO:0000255" key="3">
    <source>
        <dbReference type="PROSITE-ProRule" id="PRU00214"/>
    </source>
</evidence>
<evidence type="ECO:0000256" key="4">
    <source>
        <dbReference type="SAM" id="MobiDB-lite"/>
    </source>
</evidence>
<evidence type="ECO:0000269" key="5">
    <source>
    </source>
</evidence>
<evidence type="ECO:0000305" key="6"/>
<evidence type="ECO:0007744" key="7">
    <source>
    </source>
</evidence>
<evidence type="ECO:0007829" key="8">
    <source>
        <dbReference type="PDB" id="1WE7"/>
    </source>
</evidence>
<accession>Q8K4Z5</accession>
<accession>Q8C0M7</accession>
<accession>Q8C128</accession>
<accession>Q8C175</accession>
<accession>Q921T3</accession>